<organism>
    <name type="scientific">Sorghum bicolor</name>
    <name type="common">Sorghum</name>
    <name type="synonym">Sorghum vulgare</name>
    <dbReference type="NCBI Taxonomy" id="4558"/>
    <lineage>
        <taxon>Eukaryota</taxon>
        <taxon>Viridiplantae</taxon>
        <taxon>Streptophyta</taxon>
        <taxon>Embryophyta</taxon>
        <taxon>Tracheophyta</taxon>
        <taxon>Spermatophyta</taxon>
        <taxon>Magnoliopsida</taxon>
        <taxon>Liliopsida</taxon>
        <taxon>Poales</taxon>
        <taxon>Poaceae</taxon>
        <taxon>PACMAD clade</taxon>
        <taxon>Panicoideae</taxon>
        <taxon>Andropogonodae</taxon>
        <taxon>Andropogoneae</taxon>
        <taxon>Sorghinae</taxon>
        <taxon>Sorghum</taxon>
    </lineage>
</organism>
<protein>
    <recommendedName>
        <fullName>P-(S)-hydroxymandelonitrile lyase</fullName>
        <shortName>HNL</shortName>
        <shortName>Hydroxynitrile lyase</shortName>
        <ecNumber>4.1.2.11</ecNumber>
    </recommendedName>
    <component>
        <recommendedName>
            <fullName>P-(S)-hydroxymandelonitrile lyase chain A</fullName>
        </recommendedName>
    </component>
    <component>
        <recommendedName>
            <fullName>P-(S)-hydroxymandelonitrile lyase chain B</fullName>
        </recommendedName>
    </component>
</protein>
<dbReference type="EC" id="4.1.2.11"/>
<dbReference type="EMBL" id="AJ421152">
    <property type="protein sequence ID" value="CAD12888.1"/>
    <property type="molecule type" value="mRNA"/>
</dbReference>
<dbReference type="EMBL" id="X84057">
    <property type="protein sequence ID" value="CAA58876.1"/>
    <property type="molecule type" value="mRNA"/>
</dbReference>
<dbReference type="PIR" id="S53311">
    <property type="entry name" value="S53311"/>
</dbReference>
<dbReference type="PDB" id="1GXS">
    <property type="method" value="X-ray"/>
    <property type="resolution" value="2.30 A"/>
    <property type="chains" value="A/C=56-325, B/D=338-495"/>
</dbReference>
<dbReference type="PDBsum" id="1GXS"/>
<dbReference type="SMR" id="P52708"/>
<dbReference type="ESTHER" id="sorbi-hnl">
    <property type="family name" value="Carboxypeptidase_S10"/>
</dbReference>
<dbReference type="MEROPS" id="S10.005"/>
<dbReference type="iPTMnet" id="P52708"/>
<dbReference type="eggNOG" id="KOG1282">
    <property type="taxonomic scope" value="Eukaryota"/>
</dbReference>
<dbReference type="HOGENOM" id="CLU_008523_13_0_1"/>
<dbReference type="BioCyc" id="MetaCyc:MONOMER-14084"/>
<dbReference type="BRENDA" id="4.1.2.11">
    <property type="organism ID" value="5768"/>
</dbReference>
<dbReference type="EvolutionaryTrace" id="P52708"/>
<dbReference type="ExpressionAtlas" id="P52708">
    <property type="expression patterns" value="baseline and differential"/>
</dbReference>
<dbReference type="GO" id="GO:0050419">
    <property type="term" value="F:hydroxymandelonitrile lyase activity"/>
    <property type="evidence" value="ECO:0007669"/>
    <property type="project" value="UniProtKB-EC"/>
</dbReference>
<dbReference type="FunFam" id="3.40.50.11320:FF:000002">
    <property type="entry name" value="Carboxypeptidase"/>
    <property type="match status" value="1"/>
</dbReference>
<dbReference type="FunFam" id="3.40.50.12670:FF:000002">
    <property type="entry name" value="Carboxypeptidase"/>
    <property type="match status" value="1"/>
</dbReference>
<dbReference type="FunFam" id="3.40.50.1820:FF:000211">
    <property type="entry name" value="Carboxypeptidase"/>
    <property type="match status" value="1"/>
</dbReference>
<dbReference type="Gene3D" id="3.40.50.11320">
    <property type="match status" value="1"/>
</dbReference>
<dbReference type="Gene3D" id="6.10.250.940">
    <property type="match status" value="1"/>
</dbReference>
<dbReference type="Gene3D" id="3.40.50.1820">
    <property type="entry name" value="alpha/beta hydrolase"/>
    <property type="match status" value="1"/>
</dbReference>
<dbReference type="InterPro" id="IPR029058">
    <property type="entry name" value="AB_hydrolase_fold"/>
</dbReference>
<dbReference type="InterPro" id="IPR001563">
    <property type="entry name" value="Peptidase_S10"/>
</dbReference>
<dbReference type="InterPro" id="IPR033124">
    <property type="entry name" value="Ser_caboxypep_his_AS"/>
</dbReference>
<dbReference type="PANTHER" id="PTHR11802:SF219">
    <property type="entry name" value="CARBOXYPEPTIDASE"/>
    <property type="match status" value="1"/>
</dbReference>
<dbReference type="PANTHER" id="PTHR11802">
    <property type="entry name" value="SERINE PROTEASE FAMILY S10 SERINE CARBOXYPEPTIDASE"/>
    <property type="match status" value="1"/>
</dbReference>
<dbReference type="Pfam" id="PF00450">
    <property type="entry name" value="Peptidase_S10"/>
    <property type="match status" value="1"/>
</dbReference>
<dbReference type="PRINTS" id="PR00724">
    <property type="entry name" value="CRBOXYPTASEC"/>
</dbReference>
<dbReference type="SUPFAM" id="SSF53474">
    <property type="entry name" value="alpha/beta-Hydrolases"/>
    <property type="match status" value="1"/>
</dbReference>
<dbReference type="PROSITE" id="PS00560">
    <property type="entry name" value="CARBOXYPEPT_SER_HIS"/>
    <property type="match status" value="1"/>
</dbReference>
<evidence type="ECO:0000250" key="1">
    <source>
        <dbReference type="UniProtKB" id="P08819"/>
    </source>
</evidence>
<evidence type="ECO:0000255" key="2"/>
<evidence type="ECO:0000255" key="3">
    <source>
        <dbReference type="PROSITE-ProRule" id="PRU00498"/>
    </source>
</evidence>
<evidence type="ECO:0000269" key="4">
    <source>
    </source>
</evidence>
<evidence type="ECO:0000305" key="5"/>
<evidence type="ECO:0007744" key="6">
    <source>
        <dbReference type="PDB" id="1GXS"/>
    </source>
</evidence>
<evidence type="ECO:0007829" key="7">
    <source>
        <dbReference type="PDB" id="1GXS"/>
    </source>
</evidence>
<proteinExistence type="evidence at protein level"/>
<name>HNLS_SORBI</name>
<comment type="function">
    <text evidence="4">Involved in cyanogenesis, the release of HCN from injured tissues. Is involved in the catabolism of the cyanogenic glycoside dhurrin.</text>
</comment>
<comment type="catalytic activity">
    <reaction>
        <text>(S)-4-hydroxymandelonitrile = 4-hydroxybenzaldehyde + hydrogen cyanide</text>
        <dbReference type="Rhea" id="RHEA:15977"/>
        <dbReference type="ChEBI" id="CHEBI:16660"/>
        <dbReference type="ChEBI" id="CHEBI:17597"/>
        <dbReference type="ChEBI" id="CHEBI:18407"/>
        <dbReference type="EC" id="4.1.2.11"/>
    </reaction>
</comment>
<comment type="subunit">
    <text evidence="4">Heterotetramer of two A and two B chains. The A and B chains are linked by a disulfide bond.</text>
</comment>
<comment type="tissue specificity">
    <text>Primary leaves of seedlings.</text>
</comment>
<comment type="PTM">
    <text>The N-terminus of chain A is blocked.</text>
</comment>
<comment type="similarity">
    <text evidence="5">Belongs to the peptidase S10 family.</text>
</comment>
<sequence>MAVFISSSGSPGRATATTTTTTTLLLAVLAAAAAAGLLLAPVAARGSPPEHDKQLQLQQQEDDRIPGLPGQPNGVAFGMYGGYVTIDDNNGRALYYWFQEADTADPAAAPLVLWLNGGPGCSSIGLGAMQELGPFRVHTNGESLLLNEYAWNKAANILFAESPAGVVFSYSNTSSDLSMGDDKMAQDTYTFLVKWFERFPHYNYREFYIAGESGHFIPQLSQVVYRNRNNSPFINFQGLLVSSGLTNDHEDMIGMFELWWHHGLISDETRDSGLKVCPGTSFMHPTPECTEVWNKALAEQGNINPYTIYTPTCDREPSPYQRRFWAPHGRAAPPPLMLPPYDPCAVFNSINYLNLPEVQTALHANVSGIVEYPWTVCSNTIFDQWGQAADDLLPVYRELIQAGLRVWVYSGDTDSVVPVSSTRRSLAALELPVKTSWYPWYMAPTEREVGGWSVQYEGLTYVSPSGAGHLVPVHRPAQAFLLFKQFLKGEPMPAEEKNDILLPSEKAPFY</sequence>
<feature type="signal peptide" evidence="2">
    <location>
        <begin position="1"/>
        <end position="34"/>
    </location>
</feature>
<feature type="chain" id="PRO_0000004341" description="P-(S)-hydroxymandelonitrile lyase chain A">
    <location>
        <begin position="35"/>
        <end position="338"/>
    </location>
</feature>
<feature type="chain" id="PRO_0000004342" description="P-(S)-hydroxymandelonitrile lyase chain B">
    <location>
        <begin position="339"/>
        <end position="510"/>
    </location>
</feature>
<feature type="active site" evidence="4 6">
    <location>
        <position position="213"/>
    </location>
</feature>
<feature type="active site" evidence="1">
    <location>
        <position position="414"/>
    </location>
</feature>
<feature type="active site" evidence="1">
    <location>
        <position position="469"/>
    </location>
</feature>
<feature type="binding site" evidence="1">
    <location>
        <begin position="116"/>
        <end position="118"/>
    </location>
    <ligand>
        <name>substrate</name>
    </ligand>
</feature>
<feature type="binding site" evidence="1">
    <location>
        <begin position="212"/>
        <end position="213"/>
    </location>
    <ligand>
        <name>substrate</name>
    </ligand>
</feature>
<feature type="binding site" evidence="1">
    <location>
        <begin position="465"/>
        <end position="469"/>
    </location>
    <ligand>
        <name>substrate</name>
    </ligand>
</feature>
<feature type="glycosylation site" description="N-linked (GlcNAc...) asparagine" evidence="3 4 6">
    <location>
        <position position="172"/>
    </location>
</feature>
<feature type="glycosylation site" description="N-linked (GlcNAc...) asparagine" evidence="3 4 6">
    <location>
        <position position="365"/>
    </location>
</feature>
<feature type="disulfide bond" description="Interchain (between A and B chains)" evidence="4 6">
    <location>
        <begin position="121"/>
        <end position="377"/>
    </location>
</feature>
<feature type="disulfide bond" evidence="4 6">
    <location>
        <begin position="277"/>
        <end position="289"/>
    </location>
</feature>
<feature type="disulfide bond" description="Interchain (between A and B chains)" evidence="4 6">
    <location>
        <begin position="313"/>
        <end position="344"/>
    </location>
</feature>
<feature type="sequence conflict" description="In Ref. 3; AA sequence." evidence="5" ref="3">
    <original>C</original>
    <variation>E</variation>
    <location>
        <position position="289"/>
    </location>
</feature>
<feature type="sequence conflict" description="In Ref. 3; AA sequence." evidence="5" ref="3">
    <original>Q</original>
    <variation>E</variation>
    <location>
        <position position="300"/>
    </location>
</feature>
<feature type="sequence conflict" description="In Ref. 3; AA sequence." evidence="5" ref="3">
    <original>P</original>
    <variation>S</variation>
    <location>
        <position position="339"/>
    </location>
</feature>
<feature type="sequence conflict" description="In Ref. 3; AA sequence." evidence="5" ref="3">
    <original>D</original>
    <variation>E</variation>
    <location>
        <position position="342"/>
    </location>
</feature>
<feature type="sequence conflict" description="In Ref. 3; AA sequence." evidence="5" ref="3">
    <original>C</original>
    <variation>V</variation>
    <location>
        <position position="344"/>
    </location>
</feature>
<feature type="sequence conflict" description="In Ref. 3; AA sequence." evidence="5" ref="3">
    <original>EV</original>
    <variation>PL</variation>
    <location>
        <begin position="357"/>
        <end position="358"/>
    </location>
</feature>
<feature type="helix" evidence="7">
    <location>
        <begin position="60"/>
        <end position="63"/>
    </location>
</feature>
<feature type="strand" evidence="7">
    <location>
        <begin position="79"/>
        <end position="87"/>
    </location>
</feature>
<feature type="turn" evidence="7">
    <location>
        <begin position="88"/>
        <end position="91"/>
    </location>
</feature>
<feature type="strand" evidence="7">
    <location>
        <begin position="92"/>
        <end position="99"/>
    </location>
</feature>
<feature type="helix" evidence="7">
    <location>
        <begin position="106"/>
        <end position="108"/>
    </location>
</feature>
<feature type="strand" evidence="7">
    <location>
        <begin position="111"/>
        <end position="116"/>
    </location>
</feature>
<feature type="turn" evidence="7">
    <location>
        <begin position="118"/>
        <end position="120"/>
    </location>
</feature>
<feature type="helix" evidence="7">
    <location>
        <begin position="124"/>
        <end position="132"/>
    </location>
</feature>
<feature type="strand" evidence="7">
    <location>
        <begin position="133"/>
        <end position="137"/>
    </location>
</feature>
<feature type="strand" evidence="7">
    <location>
        <begin position="144"/>
        <end position="146"/>
    </location>
</feature>
<feature type="helix" evidence="7">
    <location>
        <begin position="151"/>
        <end position="153"/>
    </location>
</feature>
<feature type="strand" evidence="7">
    <location>
        <begin position="155"/>
        <end position="160"/>
    </location>
</feature>
<feature type="strand" evidence="7">
    <location>
        <begin position="170"/>
        <end position="173"/>
    </location>
</feature>
<feature type="helix" evidence="7">
    <location>
        <begin position="174"/>
        <end position="177"/>
    </location>
</feature>
<feature type="helix" evidence="7">
    <location>
        <begin position="181"/>
        <end position="198"/>
    </location>
</feature>
<feature type="helix" evidence="7">
    <location>
        <begin position="200"/>
        <end position="202"/>
    </location>
</feature>
<feature type="strand" evidence="7">
    <location>
        <begin position="205"/>
        <end position="212"/>
    </location>
</feature>
<feature type="helix" evidence="7">
    <location>
        <begin position="216"/>
        <end position="226"/>
    </location>
</feature>
<feature type="turn" evidence="7">
    <location>
        <begin position="227"/>
        <end position="230"/>
    </location>
</feature>
<feature type="strand" evidence="7">
    <location>
        <begin position="235"/>
        <end position="243"/>
    </location>
</feature>
<feature type="helix" evidence="7">
    <location>
        <begin position="248"/>
        <end position="261"/>
    </location>
</feature>
<feature type="helix" evidence="7">
    <location>
        <begin position="267"/>
        <end position="276"/>
    </location>
</feature>
<feature type="strand" evidence="7">
    <location>
        <begin position="282"/>
        <end position="284"/>
    </location>
</feature>
<feature type="helix" evidence="7">
    <location>
        <begin position="287"/>
        <end position="299"/>
    </location>
</feature>
<feature type="turn" evidence="7">
    <location>
        <begin position="300"/>
        <end position="302"/>
    </location>
</feature>
<feature type="turn" evidence="7">
    <location>
        <begin position="343"/>
        <end position="345"/>
    </location>
</feature>
<feature type="helix" evidence="7">
    <location>
        <begin position="346"/>
        <end position="353"/>
    </location>
</feature>
<feature type="helix" evidence="7">
    <location>
        <begin position="356"/>
        <end position="362"/>
    </location>
</feature>
<feature type="helix" evidence="7">
    <location>
        <begin position="366"/>
        <end position="368"/>
    </location>
</feature>
<feature type="helix" evidence="7">
    <location>
        <begin position="379"/>
        <end position="383"/>
    </location>
</feature>
<feature type="helix" evidence="7">
    <location>
        <begin position="393"/>
        <end position="401"/>
    </location>
</feature>
<feature type="strand" evidence="7">
    <location>
        <begin position="405"/>
        <end position="411"/>
    </location>
</feature>
<feature type="strand" evidence="7">
    <location>
        <begin position="415"/>
        <end position="417"/>
    </location>
</feature>
<feature type="helix" evidence="7">
    <location>
        <begin position="419"/>
        <end position="427"/>
    </location>
</feature>
<feature type="strand" evidence="7">
    <location>
        <begin position="433"/>
        <end position="443"/>
    </location>
</feature>
<feature type="strand" evidence="7">
    <location>
        <begin position="448"/>
        <end position="456"/>
    </location>
</feature>
<feature type="strand" evidence="7">
    <location>
        <begin position="459"/>
        <end position="464"/>
    </location>
</feature>
<feature type="helix" evidence="7">
    <location>
        <begin position="471"/>
        <end position="474"/>
    </location>
</feature>
<feature type="helix" evidence="7">
    <location>
        <begin position="476"/>
        <end position="488"/>
    </location>
</feature>
<reference key="1">
    <citation type="journal article" date="2002" name="Biochemistry">
        <title>Crystal structure of hydroxynitrile lyase from Sorghum bicolor in complex with the inhibitor benzoic acid: a novel cyanogenic enzyme.</title>
        <authorList>
            <person name="Lauble H."/>
            <person name="Miehlich B."/>
            <person name="Forster S."/>
            <person name="Wajant H."/>
            <person name="Effenberger F."/>
        </authorList>
    </citation>
    <scope>NUCLEOTIDE SEQUENCE [MRNA]</scope>
    <scope>FUNCTION</scope>
    <scope>X-RAY CRYSTALLOGRAPHY (2.3 ANGSTROMS) OF 56-325 AND 338-495 IN COMPLEX WITH INHIBITOR</scope>
    <scope>GLYCOSYLATION AT ASN-172 AND ASN-365</scope>
    <scope>DISULFIDE BONDS</scope>
</reference>
<reference key="2">
    <citation type="journal article" date="1994" name="Plant Mol. Biol.">
        <title>Molecular cloning of hydroxynitrile lyase from Sorghum bicolor (L.). Homologies to serine carboxypeptidases.</title>
        <authorList>
            <person name="Wajant H."/>
            <person name="Mundry K.-W."/>
            <person name="Pfizenmaier K."/>
        </authorList>
    </citation>
    <scope>NUCLEOTIDE SEQUENCE [MRNA] OF 145-510</scope>
    <scope>PARTIAL PROTEIN SEQUENCE</scope>
    <source>
        <strain>cv. Sordan 79</strain>
        <tissue>Seedling</tissue>
    </source>
</reference>
<reference key="3">
    <citation type="journal article" date="1992" name="Biotechnol. Appl. Biochem.">
        <title>Purification and protein characterisation of hydroxynitrile lyases from sorghum and almond.</title>
        <authorList>
            <person name="Jansen J."/>
            <person name="Woker J."/>
            <person name="Kula M.-R."/>
        </authorList>
    </citation>
    <scope>PROTEIN SEQUENCE OF 185-220; 285-311 AND 339-358</scope>
</reference>
<accession>P52708</accession>
<accession>Q8W4X3</accession>
<keyword id="KW-0002">3D-structure</keyword>
<keyword id="KW-0903">Direct protein sequencing</keyword>
<keyword id="KW-1015">Disulfide bond</keyword>
<keyword id="KW-0325">Glycoprotein</keyword>
<keyword id="KW-0456">Lyase</keyword>
<keyword id="KW-0732">Signal</keyword>